<name>BL1S4_MOUSE</name>
<gene>
    <name type="primary">Bloc1s4</name>
    <name type="synonym">Cno</name>
</gene>
<reference key="1">
    <citation type="journal article" date="2003" name="Blood">
        <title>Cappuccino, a mouse model of Hermansky-Pudlak syndrome, encodes a novel protein that is part of the pallidin-muted complex (BLOC-1).</title>
        <authorList>
            <person name="Ciciotte S.L."/>
            <person name="Gwynn B."/>
            <person name="Moriyama K."/>
            <person name="Huizing M."/>
            <person name="Gahl W.A."/>
            <person name="Bonifacino J.S."/>
            <person name="Peters L.L."/>
        </authorList>
    </citation>
    <scope>NUCLEOTIDE SEQUENCE [GENOMIC DNA]</scope>
    <scope>IDENTIFICATION IN THE BLOC-1 COMPLEX</scope>
    <scope>SUBCELLULAR LOCATION</scope>
    <scope>TISSUE SPECIFICITY</scope>
    <scope>INTERACTION WITH BLOC1S5 AND BLOC1S6</scope>
    <source>
        <strain>C3H/HeJ</strain>
    </source>
</reference>
<reference key="2">
    <citation type="journal article" date="2004" name="Genome Res.">
        <title>The status, quality, and expansion of the NIH full-length cDNA project: the Mammalian Gene Collection (MGC).</title>
        <authorList>
            <consortium name="The MGC Project Team"/>
        </authorList>
    </citation>
    <scope>NUCLEOTIDE SEQUENCE [LARGE SCALE MRNA]</scope>
</reference>
<reference key="3">
    <citation type="journal article" date="2000" name="Blood">
        <title>Defects in the cappuccino (cno) gene on mouse chromosome 5 and human 4p cause Hermansky-Pudlak syndrome by an AP-3-independent mechanism.</title>
        <authorList>
            <person name="Gwynn B."/>
            <person name="Ciciotte S.L."/>
            <person name="Hunter S.J."/>
            <person name="Washburn L.L."/>
            <person name="Smith R.S."/>
            <person name="Andersen S.G."/>
            <person name="Swank R.T."/>
            <person name="Dell'Angelica E.C."/>
            <person name="Bonifacino J.S."/>
            <person name="Eicher E.M."/>
            <person name="Peters L.L."/>
        </authorList>
    </citation>
    <scope>DISEASE</scope>
</reference>
<reference key="4">
    <citation type="journal article" date="2006" name="Mol. Biol. Cell">
        <title>BLOC-1 complex deficiency alters the targeting of adaptor protein complex-3 cargoes.</title>
        <authorList>
            <person name="Salazar G."/>
            <person name="Craige B."/>
            <person name="Styers M.L."/>
            <person name="Newell-Litwa K.A."/>
            <person name="Doucette M.M."/>
            <person name="Wainer B.H."/>
            <person name="Falcon-Perez J.M."/>
            <person name="Dell'Angelica E.C."/>
            <person name="Peden A.A."/>
            <person name="Werner E."/>
            <person name="Faundez V."/>
        </authorList>
    </citation>
    <scope>FUNCTION</scope>
</reference>
<reference key="5">
    <citation type="journal article" date="2010" name="Cell">
        <title>A tissue-specific atlas of mouse protein phosphorylation and expression.</title>
        <authorList>
            <person name="Huttlin E.L."/>
            <person name="Jedrychowski M.P."/>
            <person name="Elias J.E."/>
            <person name="Goswami T."/>
            <person name="Rad R."/>
            <person name="Beausoleil S.A."/>
            <person name="Villen J."/>
            <person name="Haas W."/>
            <person name="Sowa M.E."/>
            <person name="Gygi S.P."/>
        </authorList>
    </citation>
    <scope>IDENTIFICATION BY MASS SPECTROMETRY [LARGE SCALE ANALYSIS]</scope>
    <source>
        <tissue>Spleen</tissue>
        <tissue>Testis</tissue>
    </source>
</reference>
<reference key="6">
    <citation type="journal article" date="2010" name="Mol. Psychiatry">
        <title>The dysbindin-containing complex (BLOC-1) in brain: developmental regulation, interaction with SNARE proteins and role in neurite outgrowth.</title>
        <authorList>
            <person name="Ghiani C.A."/>
            <person name="Starcevic M."/>
            <person name="Rodriguez-Fernandez I.A."/>
            <person name="Nazarian R."/>
            <person name="Cheli V.T."/>
            <person name="Chan L.N."/>
            <person name="Malvar J.S."/>
            <person name="de Vellis J."/>
            <person name="Sabatti C."/>
            <person name="Dell'Angelica E.C."/>
        </authorList>
    </citation>
    <scope>FUNCTION</scope>
</reference>
<reference key="7">
    <citation type="journal article" date="2011" name="Mol. Biol. Cell">
        <title>The schizophrenia susceptibility factor dysbindin and its associated complex sort cargoes from cell bodies to the synapse.</title>
        <authorList>
            <person name="Larimore J."/>
            <person name="Tornieri K."/>
            <person name="Ryder P.V."/>
            <person name="Gokhale A."/>
            <person name="Zlatic S.A."/>
            <person name="Craige B."/>
            <person name="Lee J.D."/>
            <person name="Talbot K."/>
            <person name="Pare J.F."/>
            <person name="Smith Y."/>
            <person name="Faundez V."/>
        </authorList>
    </citation>
    <scope>FUNCTION</scope>
    <scope>ASSOCIATION WITH THE AP-3 COMPLEX</scope>
</reference>
<feature type="chain" id="PRO_0000089976" description="Biogenesis of lysosome-related organelles complex 1 subunit 4">
    <location>
        <begin position="1"/>
        <end position="215"/>
    </location>
</feature>
<feature type="region of interest" description="Disordered" evidence="4">
    <location>
        <begin position="1"/>
        <end position="57"/>
    </location>
</feature>
<feature type="coiled-coil region" evidence="3">
    <location>
        <begin position="80"/>
        <end position="97"/>
    </location>
</feature>
<feature type="coiled-coil region" evidence="3">
    <location>
        <begin position="134"/>
        <end position="165"/>
    </location>
</feature>
<feature type="compositionally biased region" description="Low complexity" evidence="4">
    <location>
        <begin position="27"/>
        <end position="42"/>
    </location>
</feature>
<feature type="modified residue" description="Phosphothreonine" evidence="2">
    <location>
        <position position="164"/>
    </location>
</feature>
<sequence>MEEGPAVGTLSREVSTEEAEPLGAAWSGDSGHVSQSHSSASGPWDDDGPEDAPGRDLPLLRRAASGYASSLLPSAGPRPEVEALDASLEELLAKVDEFVGMLDMIRGDSSHVVGEGVPRIHAKAAEMRRIYGRIDKLEAFVRMIGSSVARMEEQVAKAEAELGTFPRAFRRLLHTISVPALFRSAPSGPQRAAYEPPVLFRTEDHFPGCGDRPQL</sequence>
<keyword id="KW-0015">Albinism</keyword>
<keyword id="KW-0175">Coiled coil</keyword>
<keyword id="KW-0963">Cytoplasm</keyword>
<keyword id="KW-0597">Phosphoprotein</keyword>
<keyword id="KW-1185">Reference proteome</keyword>
<protein>
    <recommendedName>
        <fullName>Biogenesis of lysosome-related organelles complex 1 subunit 4</fullName>
        <shortName>BLOC-1 subunit 4</shortName>
    </recommendedName>
    <alternativeName>
        <fullName>Protein cappuccino homolog</fullName>
    </alternativeName>
</protein>
<evidence type="ECO:0000250" key="1"/>
<evidence type="ECO:0000250" key="2">
    <source>
        <dbReference type="UniProtKB" id="Q9NUP1"/>
    </source>
</evidence>
<evidence type="ECO:0000255" key="3"/>
<evidence type="ECO:0000256" key="4">
    <source>
        <dbReference type="SAM" id="MobiDB-lite"/>
    </source>
</evidence>
<evidence type="ECO:0000269" key="5">
    <source>
    </source>
</evidence>
<evidence type="ECO:0000269" key="6">
    <source>
    </source>
</evidence>
<evidence type="ECO:0000269" key="7">
    <source>
    </source>
</evidence>
<evidence type="ECO:0000269" key="8">
    <source>
    </source>
</evidence>
<evidence type="ECO:0000269" key="9">
    <source>
    </source>
</evidence>
<evidence type="ECO:0000305" key="10"/>
<comment type="function">
    <text evidence="7 8 9">Component of the BLOC-1 complex, a complex that is required for normal biogenesis of lysosome-related organelles (LRO), such as platelet dense granules and melanosomes. In concert with the AP-3 complex, the BLOC-1 complex is required to target membrane protein cargos into vesicles assembled at cell bodies for delivery into neurites and nerve terminals. The BLOC-1 complex, in association with SNARE proteins, is also proposed to be involved in neurite extension. Plays a role in intracellular vesicle trafficking.</text>
</comment>
<comment type="subunit">
    <text evidence="1 6">Octamer composed of one copy each BLOC1S1, BLOC1S2, BLOC1S3, BLOC1S4, BLOC1S5, BLOC1S6, DTNBP1/BLOC1S7 and SNAPIN/BLOC1S8 (By similarity). Component of the biogenesis of lysosome-related organelles complex 1 (BLOC-1) composed of BLOC1S1, BLOC1S2, BLOC1S3, BLOC1S4, BLOC1S5, BLOC1S6, DTNBP1/BLOC1S7 and SNAPIN/BLOC1S8. The BLOC-1 complex associates with the AP-3 protein complex and membrane protein cargos. Interacts with BLOC1S5 and BLOC1S6.</text>
</comment>
<comment type="subcellular location">
    <subcellularLocation>
        <location evidence="6">Cytoplasm</location>
    </subcellularLocation>
</comment>
<comment type="tissue specificity">
    <text evidence="6">Widely expressed.</text>
</comment>
<comment type="disease">
    <text evidence="5">Defects in Cno are the cause of the cappuccino (Cno) mutant, which is characterized by a severe oculocutaneous albinism due to abnormal melanosome formation, and prolonged bleeding due to deficiency of platelet dense body contents.</text>
</comment>
<comment type="similarity">
    <text evidence="10">Belongs to the BLOC1S4 family.</text>
</comment>
<dbReference type="EMBL" id="AY186603">
    <property type="protein sequence ID" value="AAO65401.1"/>
    <property type="molecule type" value="Genomic_DNA"/>
</dbReference>
<dbReference type="EMBL" id="BC019169">
    <property type="protein sequence ID" value="AAH19169.1"/>
    <property type="molecule type" value="mRNA"/>
</dbReference>
<dbReference type="CCDS" id="CCDS19241.1"/>
<dbReference type="RefSeq" id="NP_598485.1">
    <property type="nucleotide sequence ID" value="NM_133724.3"/>
</dbReference>
<dbReference type="SMR" id="Q8VED2"/>
<dbReference type="BioGRID" id="228183">
    <property type="interactions" value="4"/>
</dbReference>
<dbReference type="ComplexPortal" id="CPX-1913">
    <property type="entry name" value="BLOC-1 complex"/>
</dbReference>
<dbReference type="CORUM" id="Q8VED2"/>
<dbReference type="FunCoup" id="Q8VED2">
    <property type="interactions" value="384"/>
</dbReference>
<dbReference type="STRING" id="10090.ENSMUSP00000071840"/>
<dbReference type="iPTMnet" id="Q8VED2"/>
<dbReference type="PhosphoSitePlus" id="Q8VED2"/>
<dbReference type="SwissPalm" id="Q8VED2"/>
<dbReference type="PaxDb" id="10090-ENSMUSP00000071840"/>
<dbReference type="PeptideAtlas" id="Q8VED2"/>
<dbReference type="ProteomicsDB" id="273676"/>
<dbReference type="Pumba" id="Q8VED2"/>
<dbReference type="Antibodypedia" id="22679">
    <property type="antibodies" value="63 antibodies from 18 providers"/>
</dbReference>
<dbReference type="Ensembl" id="ENSMUST00000071949.5">
    <property type="protein sequence ID" value="ENSMUSP00000071840.4"/>
    <property type="gene ID" value="ENSMUSG00000060708.5"/>
</dbReference>
<dbReference type="GeneID" id="117197"/>
<dbReference type="KEGG" id="mmu:117197"/>
<dbReference type="UCSC" id="uc008xez.1">
    <property type="organism name" value="mouse"/>
</dbReference>
<dbReference type="AGR" id="MGI:1929230"/>
<dbReference type="CTD" id="55330"/>
<dbReference type="MGI" id="MGI:1929230">
    <property type="gene designation" value="Bloc1s4"/>
</dbReference>
<dbReference type="VEuPathDB" id="HostDB:ENSMUSG00000060708"/>
<dbReference type="eggNOG" id="ENOG502S1N9">
    <property type="taxonomic scope" value="Eukaryota"/>
</dbReference>
<dbReference type="GeneTree" id="ENSGT00390000006790"/>
<dbReference type="HOGENOM" id="CLU_096507_3_0_1"/>
<dbReference type="InParanoid" id="Q8VED2"/>
<dbReference type="OMA" id="MLDMIRG"/>
<dbReference type="OrthoDB" id="2372305at2759"/>
<dbReference type="PhylomeDB" id="Q8VED2"/>
<dbReference type="TreeFam" id="TF326629"/>
<dbReference type="Reactome" id="R-MMU-432722">
    <property type="pathway name" value="Golgi Associated Vesicle Biogenesis"/>
</dbReference>
<dbReference type="BioGRID-ORCS" id="117197">
    <property type="hits" value="9 hits in 78 CRISPR screens"/>
</dbReference>
<dbReference type="PRO" id="PR:Q8VED2"/>
<dbReference type="Proteomes" id="UP000000589">
    <property type="component" value="Chromosome 5"/>
</dbReference>
<dbReference type="RNAct" id="Q8VED2">
    <property type="molecule type" value="protein"/>
</dbReference>
<dbReference type="Bgee" id="ENSMUSG00000060708">
    <property type="expression patterns" value="Expressed in indifferent gonad and 222 other cell types or tissues"/>
</dbReference>
<dbReference type="GO" id="GO:1904115">
    <property type="term" value="C:axon cytoplasm"/>
    <property type="evidence" value="ECO:0007669"/>
    <property type="project" value="GOC"/>
</dbReference>
<dbReference type="GO" id="GO:0031083">
    <property type="term" value="C:BLOC-1 complex"/>
    <property type="evidence" value="ECO:0000314"/>
    <property type="project" value="MGI"/>
</dbReference>
<dbReference type="GO" id="GO:0005737">
    <property type="term" value="C:cytoplasm"/>
    <property type="evidence" value="ECO:0000314"/>
    <property type="project" value="UniProtKB"/>
</dbReference>
<dbReference type="GO" id="GO:0008089">
    <property type="term" value="P:anterograde axonal transport"/>
    <property type="evidence" value="ECO:0000315"/>
    <property type="project" value="UniProtKB"/>
</dbReference>
<dbReference type="GO" id="GO:0048490">
    <property type="term" value="P:anterograde synaptic vesicle transport"/>
    <property type="evidence" value="ECO:0000315"/>
    <property type="project" value="UniProtKB"/>
</dbReference>
<dbReference type="GO" id="GO:0032438">
    <property type="term" value="P:melanosome organization"/>
    <property type="evidence" value="ECO:0000315"/>
    <property type="project" value="MGI"/>
</dbReference>
<dbReference type="GO" id="GO:0050885">
    <property type="term" value="P:neuromuscular process controlling balance"/>
    <property type="evidence" value="ECO:0000315"/>
    <property type="project" value="MGI"/>
</dbReference>
<dbReference type="GO" id="GO:0031175">
    <property type="term" value="P:neuron projection development"/>
    <property type="evidence" value="ECO:0000303"/>
    <property type="project" value="UniProtKB"/>
</dbReference>
<dbReference type="GO" id="GO:0070527">
    <property type="term" value="P:platelet aggregation"/>
    <property type="evidence" value="ECO:0000315"/>
    <property type="project" value="MGI"/>
</dbReference>
<dbReference type="InterPro" id="IPR024857">
    <property type="entry name" value="Cappuccino"/>
</dbReference>
<dbReference type="PANTHER" id="PTHR16230:SF4">
    <property type="entry name" value="BIOGENESIS OF LYSOSOME-RELATED ORGANELLES COMPLEX 1 SUBUNIT 4"/>
    <property type="match status" value="1"/>
</dbReference>
<dbReference type="PANTHER" id="PTHR16230">
    <property type="entry name" value="CAPPUCCINO"/>
    <property type="match status" value="1"/>
</dbReference>
<proteinExistence type="evidence at protein level"/>
<organism>
    <name type="scientific">Mus musculus</name>
    <name type="common">Mouse</name>
    <dbReference type="NCBI Taxonomy" id="10090"/>
    <lineage>
        <taxon>Eukaryota</taxon>
        <taxon>Metazoa</taxon>
        <taxon>Chordata</taxon>
        <taxon>Craniata</taxon>
        <taxon>Vertebrata</taxon>
        <taxon>Euteleostomi</taxon>
        <taxon>Mammalia</taxon>
        <taxon>Eutheria</taxon>
        <taxon>Euarchontoglires</taxon>
        <taxon>Glires</taxon>
        <taxon>Rodentia</taxon>
        <taxon>Myomorpha</taxon>
        <taxon>Muroidea</taxon>
        <taxon>Muridae</taxon>
        <taxon>Murinae</taxon>
        <taxon>Mus</taxon>
        <taxon>Mus</taxon>
    </lineage>
</organism>
<accession>Q8VED2</accession>